<reference key="1">
    <citation type="submission" date="2008-04" db="EMBL/GenBank/DDBJ databases">
        <title>Complete sequence of Clostridium botulinum strain Eklund.</title>
        <authorList>
            <person name="Brinkac L.M."/>
            <person name="Brown J.L."/>
            <person name="Bruce D."/>
            <person name="Detter C."/>
            <person name="Munk C."/>
            <person name="Smith L.A."/>
            <person name="Smith T.J."/>
            <person name="Sutton G."/>
            <person name="Brettin T.S."/>
        </authorList>
    </citation>
    <scope>NUCLEOTIDE SEQUENCE [LARGE SCALE GENOMIC DNA]</scope>
    <source>
        <strain>Eklund 17B / Type B</strain>
    </source>
</reference>
<organism>
    <name type="scientific">Clostridium botulinum (strain Eklund 17B / Type B)</name>
    <dbReference type="NCBI Taxonomy" id="935198"/>
    <lineage>
        <taxon>Bacteria</taxon>
        <taxon>Bacillati</taxon>
        <taxon>Bacillota</taxon>
        <taxon>Clostridia</taxon>
        <taxon>Eubacteriales</taxon>
        <taxon>Clostridiaceae</taxon>
        <taxon>Clostridium</taxon>
    </lineage>
</organism>
<keyword id="KW-0028">Amino-acid biosynthesis</keyword>
<keyword id="KW-0963">Cytoplasm</keyword>
<keyword id="KW-0554">One-carbon metabolism</keyword>
<keyword id="KW-0663">Pyridoxal phosphate</keyword>
<keyword id="KW-0808">Transferase</keyword>
<name>GLYA_CLOBB</name>
<protein>
    <recommendedName>
        <fullName evidence="1">Serine hydroxymethyltransferase</fullName>
        <shortName evidence="1">SHMT</shortName>
        <shortName evidence="1">Serine methylase</shortName>
        <ecNumber evidence="1">2.1.2.1</ecNumber>
    </recommendedName>
</protein>
<comment type="function">
    <text evidence="1">Catalyzes the reversible interconversion of serine and glycine with tetrahydrofolate (THF) serving as the one-carbon carrier. This reaction serves as the major source of one-carbon groups required for the biosynthesis of purines, thymidylate, methionine, and other important biomolecules. Also exhibits THF-independent aldolase activity toward beta-hydroxyamino acids, producing glycine and aldehydes, via a retro-aldol mechanism.</text>
</comment>
<comment type="catalytic activity">
    <reaction evidence="1">
        <text>(6R)-5,10-methylene-5,6,7,8-tetrahydrofolate + glycine + H2O = (6S)-5,6,7,8-tetrahydrofolate + L-serine</text>
        <dbReference type="Rhea" id="RHEA:15481"/>
        <dbReference type="ChEBI" id="CHEBI:15377"/>
        <dbReference type="ChEBI" id="CHEBI:15636"/>
        <dbReference type="ChEBI" id="CHEBI:33384"/>
        <dbReference type="ChEBI" id="CHEBI:57305"/>
        <dbReference type="ChEBI" id="CHEBI:57453"/>
        <dbReference type="EC" id="2.1.2.1"/>
    </reaction>
</comment>
<comment type="cofactor">
    <cofactor evidence="1">
        <name>pyridoxal 5'-phosphate</name>
        <dbReference type="ChEBI" id="CHEBI:597326"/>
    </cofactor>
</comment>
<comment type="pathway">
    <text evidence="1">One-carbon metabolism; tetrahydrofolate interconversion.</text>
</comment>
<comment type="pathway">
    <text evidence="1">Amino-acid biosynthesis; glycine biosynthesis; glycine from L-serine: step 1/1.</text>
</comment>
<comment type="subunit">
    <text evidence="1">Homodimer.</text>
</comment>
<comment type="subcellular location">
    <subcellularLocation>
        <location evidence="1">Cytoplasm</location>
    </subcellularLocation>
</comment>
<comment type="similarity">
    <text evidence="1">Belongs to the SHMT family.</text>
</comment>
<sequence>MNFEHISREDNEIYALIEKELERQQNGIELIASENVASEAVMEAMGSYLTNKYAEGYPGKRYYGGCYVVDGVEEIARERAKELFGAEHANVQPHSGSQANMAVYFTILEHGDTVLGMDLSHGGHLTHGSPVNFSGKLFNFVSYGVDKDTEEINYDVVRELAIKHKPKLIVAGASAYSRIIDFKKFREICDEIGAYLMVDMAHIAGLVAAELHPSPVPYADFVTSTTHKTLRGPRGGLILCKEKYAKDLDKNIFPGMQGGPLMHIIAAKAVCFKEALDPSFKEYMARVVENCKELGEQLVKRGFKLVSNGTDNHLILVDLNNKDITGKDAEKLLDEVGITLNKNTVPNETRSPFVTSGVRIGTAAITTRGFERRDMEEIADIINETIINRDKDLEQYKQRVEALCEKYPLYK</sequence>
<gene>
    <name evidence="1" type="primary">glyA</name>
    <name type="ordered locus">CLL_A1084</name>
</gene>
<evidence type="ECO:0000255" key="1">
    <source>
        <dbReference type="HAMAP-Rule" id="MF_00051"/>
    </source>
</evidence>
<feature type="chain" id="PRO_1000091530" description="Serine hydroxymethyltransferase">
    <location>
        <begin position="1"/>
        <end position="411"/>
    </location>
</feature>
<feature type="binding site" evidence="1">
    <location>
        <position position="119"/>
    </location>
    <ligand>
        <name>(6S)-5,6,7,8-tetrahydrofolate</name>
        <dbReference type="ChEBI" id="CHEBI:57453"/>
    </ligand>
</feature>
<feature type="binding site" evidence="1">
    <location>
        <begin position="123"/>
        <end position="125"/>
    </location>
    <ligand>
        <name>(6S)-5,6,7,8-tetrahydrofolate</name>
        <dbReference type="ChEBI" id="CHEBI:57453"/>
    </ligand>
</feature>
<feature type="binding site" evidence="1">
    <location>
        <begin position="351"/>
        <end position="353"/>
    </location>
    <ligand>
        <name>(6S)-5,6,7,8-tetrahydrofolate</name>
        <dbReference type="ChEBI" id="CHEBI:57453"/>
    </ligand>
</feature>
<feature type="site" description="Plays an important role in substrate specificity" evidence="1">
    <location>
        <position position="227"/>
    </location>
</feature>
<feature type="modified residue" description="N6-(pyridoxal phosphate)lysine" evidence="1">
    <location>
        <position position="228"/>
    </location>
</feature>
<dbReference type="EC" id="2.1.2.1" evidence="1"/>
<dbReference type="EMBL" id="CP001056">
    <property type="protein sequence ID" value="ACD22661.1"/>
    <property type="molecule type" value="Genomic_DNA"/>
</dbReference>
<dbReference type="SMR" id="B2TN52"/>
<dbReference type="KEGG" id="cbk:CLL_A1084"/>
<dbReference type="PATRIC" id="fig|935198.13.peg.1032"/>
<dbReference type="HOGENOM" id="CLU_022477_2_1_9"/>
<dbReference type="UniPathway" id="UPA00193"/>
<dbReference type="UniPathway" id="UPA00288">
    <property type="reaction ID" value="UER01023"/>
</dbReference>
<dbReference type="Proteomes" id="UP000001195">
    <property type="component" value="Chromosome"/>
</dbReference>
<dbReference type="GO" id="GO:0005829">
    <property type="term" value="C:cytosol"/>
    <property type="evidence" value="ECO:0007669"/>
    <property type="project" value="TreeGrafter"/>
</dbReference>
<dbReference type="GO" id="GO:0004372">
    <property type="term" value="F:glycine hydroxymethyltransferase activity"/>
    <property type="evidence" value="ECO:0007669"/>
    <property type="project" value="UniProtKB-UniRule"/>
</dbReference>
<dbReference type="GO" id="GO:0030170">
    <property type="term" value="F:pyridoxal phosphate binding"/>
    <property type="evidence" value="ECO:0007669"/>
    <property type="project" value="UniProtKB-UniRule"/>
</dbReference>
<dbReference type="GO" id="GO:0019264">
    <property type="term" value="P:glycine biosynthetic process from serine"/>
    <property type="evidence" value="ECO:0007669"/>
    <property type="project" value="UniProtKB-UniRule"/>
</dbReference>
<dbReference type="GO" id="GO:0035999">
    <property type="term" value="P:tetrahydrofolate interconversion"/>
    <property type="evidence" value="ECO:0007669"/>
    <property type="project" value="UniProtKB-UniRule"/>
</dbReference>
<dbReference type="CDD" id="cd00378">
    <property type="entry name" value="SHMT"/>
    <property type="match status" value="1"/>
</dbReference>
<dbReference type="FunFam" id="3.40.640.10:FF:000001">
    <property type="entry name" value="Serine hydroxymethyltransferase"/>
    <property type="match status" value="1"/>
</dbReference>
<dbReference type="FunFam" id="3.90.1150.10:FF:000003">
    <property type="entry name" value="Serine hydroxymethyltransferase"/>
    <property type="match status" value="1"/>
</dbReference>
<dbReference type="Gene3D" id="3.90.1150.10">
    <property type="entry name" value="Aspartate Aminotransferase, domain 1"/>
    <property type="match status" value="1"/>
</dbReference>
<dbReference type="Gene3D" id="3.40.640.10">
    <property type="entry name" value="Type I PLP-dependent aspartate aminotransferase-like (Major domain)"/>
    <property type="match status" value="1"/>
</dbReference>
<dbReference type="HAMAP" id="MF_00051">
    <property type="entry name" value="SHMT"/>
    <property type="match status" value="1"/>
</dbReference>
<dbReference type="InterPro" id="IPR015424">
    <property type="entry name" value="PyrdxlP-dep_Trfase"/>
</dbReference>
<dbReference type="InterPro" id="IPR015421">
    <property type="entry name" value="PyrdxlP-dep_Trfase_major"/>
</dbReference>
<dbReference type="InterPro" id="IPR015422">
    <property type="entry name" value="PyrdxlP-dep_Trfase_small"/>
</dbReference>
<dbReference type="InterPro" id="IPR001085">
    <property type="entry name" value="Ser_HO-MeTrfase"/>
</dbReference>
<dbReference type="InterPro" id="IPR049943">
    <property type="entry name" value="Ser_HO-MeTrfase-like"/>
</dbReference>
<dbReference type="InterPro" id="IPR019798">
    <property type="entry name" value="Ser_HO-MeTrfase_PLP_BS"/>
</dbReference>
<dbReference type="InterPro" id="IPR039429">
    <property type="entry name" value="SHMT-like_dom"/>
</dbReference>
<dbReference type="NCBIfam" id="NF000586">
    <property type="entry name" value="PRK00011.1"/>
    <property type="match status" value="1"/>
</dbReference>
<dbReference type="PANTHER" id="PTHR11680">
    <property type="entry name" value="SERINE HYDROXYMETHYLTRANSFERASE"/>
    <property type="match status" value="1"/>
</dbReference>
<dbReference type="PANTHER" id="PTHR11680:SF35">
    <property type="entry name" value="SERINE HYDROXYMETHYLTRANSFERASE 1"/>
    <property type="match status" value="1"/>
</dbReference>
<dbReference type="Pfam" id="PF00464">
    <property type="entry name" value="SHMT"/>
    <property type="match status" value="1"/>
</dbReference>
<dbReference type="PIRSF" id="PIRSF000412">
    <property type="entry name" value="SHMT"/>
    <property type="match status" value="1"/>
</dbReference>
<dbReference type="SUPFAM" id="SSF53383">
    <property type="entry name" value="PLP-dependent transferases"/>
    <property type="match status" value="1"/>
</dbReference>
<dbReference type="PROSITE" id="PS00096">
    <property type="entry name" value="SHMT"/>
    <property type="match status" value="1"/>
</dbReference>
<accession>B2TN52</accession>
<proteinExistence type="inferred from homology"/>